<keyword id="KW-0186">Copper</keyword>
<keyword id="KW-0249">Electron transport</keyword>
<keyword id="KW-0460">Magnesium</keyword>
<keyword id="KW-0472">Membrane</keyword>
<keyword id="KW-0479">Metal-binding</keyword>
<keyword id="KW-0496">Mitochondrion</keyword>
<keyword id="KW-0999">Mitochondrion inner membrane</keyword>
<keyword id="KW-0679">Respiratory chain</keyword>
<keyword id="KW-1278">Translocase</keyword>
<keyword id="KW-0812">Transmembrane</keyword>
<keyword id="KW-1133">Transmembrane helix</keyword>
<keyword id="KW-0813">Transport</keyword>
<sequence length="227" mass="25926">MAYSFQLGLQDATSPIMEELMNFHDHTLMIVFLISSLVLYIISLMLTTKLTHTSTMDAQEVETIWTILPAVILIMIALPSLRILYMMDEINNPVLTVKTMGHQWYWSYEYTDYEDLCFDSYMIPTNDLKPGELRLLEVDNRVVLPMELPIRMLVSSEDVLHSWAVPSLGLKTDAIPGRLNQATVTSNRPGLFYGQCSEICGSNHSFMPIVLEMVPLKHFENWSASMI</sequence>
<reference key="1">
    <citation type="journal article" date="2005" name="Mol. Phylogenet. Evol.">
        <title>Multigene phylogeny of the Old World mice, Murinae, reveals distinct geographic lineages and the declining utility of mitochondrial genes compared to nuclear genes.</title>
        <authorList>
            <person name="Steppan S.J."/>
            <person name="Adkins R.M."/>
            <person name="Spinks P.Q."/>
            <person name="Hale C."/>
        </authorList>
    </citation>
    <scope>NUCLEOTIDE SEQUENCE [GENOMIC DNA]</scope>
</reference>
<feature type="chain" id="PRO_0000254936" description="Cytochrome c oxidase subunit 2">
    <location>
        <begin position="1"/>
        <end position="227"/>
    </location>
</feature>
<feature type="topological domain" description="Mitochondrial intermembrane" evidence="3">
    <location>
        <begin position="1"/>
        <end position="14"/>
    </location>
</feature>
<feature type="transmembrane region" description="Helical; Name=I" evidence="3">
    <location>
        <begin position="15"/>
        <end position="45"/>
    </location>
</feature>
<feature type="topological domain" description="Mitochondrial matrix" evidence="3">
    <location>
        <begin position="46"/>
        <end position="59"/>
    </location>
</feature>
<feature type="transmembrane region" description="Helical; Name=II" evidence="3">
    <location>
        <begin position="60"/>
        <end position="87"/>
    </location>
</feature>
<feature type="topological domain" description="Mitochondrial intermembrane" evidence="3">
    <location>
        <begin position="88"/>
        <end position="227"/>
    </location>
</feature>
<feature type="binding site" evidence="3">
    <location>
        <position position="161"/>
    </location>
    <ligand>
        <name>Cu cation</name>
        <dbReference type="ChEBI" id="CHEBI:23378"/>
        <label>A1</label>
    </ligand>
</feature>
<feature type="binding site" evidence="3">
    <location>
        <position position="196"/>
    </location>
    <ligand>
        <name>Cu cation</name>
        <dbReference type="ChEBI" id="CHEBI:23378"/>
        <label>A1</label>
    </ligand>
</feature>
<feature type="binding site" evidence="3">
    <location>
        <position position="196"/>
    </location>
    <ligand>
        <name>Cu cation</name>
        <dbReference type="ChEBI" id="CHEBI:23378"/>
        <label>A2</label>
    </ligand>
</feature>
<feature type="binding site" evidence="3">
    <location>
        <position position="198"/>
    </location>
    <ligand>
        <name>Cu cation</name>
        <dbReference type="ChEBI" id="CHEBI:23378"/>
        <label>A2</label>
    </ligand>
</feature>
<feature type="binding site" evidence="3">
    <location>
        <position position="198"/>
    </location>
    <ligand>
        <name>Mg(2+)</name>
        <dbReference type="ChEBI" id="CHEBI:18420"/>
        <note>ligand shared with MT-CO1</note>
    </ligand>
</feature>
<feature type="binding site" evidence="3">
    <location>
        <position position="200"/>
    </location>
    <ligand>
        <name>Cu cation</name>
        <dbReference type="ChEBI" id="CHEBI:23378"/>
        <label>A1</label>
    </ligand>
</feature>
<feature type="binding site" evidence="3">
    <location>
        <position position="200"/>
    </location>
    <ligand>
        <name>Cu cation</name>
        <dbReference type="ChEBI" id="CHEBI:23378"/>
        <label>A2</label>
    </ligand>
</feature>
<feature type="binding site" evidence="3">
    <location>
        <position position="204"/>
    </location>
    <ligand>
        <name>Cu cation</name>
        <dbReference type="ChEBI" id="CHEBI:23378"/>
        <label>A2</label>
    </ligand>
</feature>
<feature type="binding site" evidence="3">
    <location>
        <position position="207"/>
    </location>
    <ligand>
        <name>Cu cation</name>
        <dbReference type="ChEBI" id="CHEBI:23378"/>
        <label>A1</label>
    </ligand>
</feature>
<evidence type="ECO:0000250" key="1">
    <source>
        <dbReference type="UniProtKB" id="P00403"/>
    </source>
</evidence>
<evidence type="ECO:0000250" key="2">
    <source>
        <dbReference type="UniProtKB" id="P00410"/>
    </source>
</evidence>
<evidence type="ECO:0000250" key="3">
    <source>
        <dbReference type="UniProtKB" id="P68530"/>
    </source>
</evidence>
<evidence type="ECO:0000305" key="4"/>
<gene>
    <name type="primary">MT-CO2</name>
    <name type="synonym">COII</name>
    <name type="synonym">COX2</name>
    <name type="synonym">COXII</name>
    <name type="synonym">MTCO2</name>
</gene>
<geneLocation type="mitochondrion"/>
<protein>
    <recommendedName>
        <fullName>Cytochrome c oxidase subunit 2</fullName>
        <ecNumber>7.1.1.9</ecNumber>
    </recommendedName>
    <alternativeName>
        <fullName>Cytochrome c oxidase polypeptide II</fullName>
    </alternativeName>
</protein>
<comment type="function">
    <text evidence="2">Component of the cytochrome c oxidase, the last enzyme in the mitochondrial electron transport chain which drives oxidative phosphorylation. The respiratory chain contains 3 multisubunit complexes succinate dehydrogenase (complex II, CII), ubiquinol-cytochrome c oxidoreductase (cytochrome b-c1 complex, complex III, CIII) and cytochrome c oxidase (complex IV, CIV), that cooperate to transfer electrons derived from NADH and succinate to molecular oxygen, creating an electrochemical gradient over the inner membrane that drives transmembrane transport and the ATP synthase. Cytochrome c oxidase is the component of the respiratory chain that catalyzes the reduction of oxygen to water. Electrons originating from reduced cytochrome c in the intermembrane space (IMS) are transferred via the dinuclear copper A center (CU(A)) of subunit 2 and heme A of subunit 1 to the active site in subunit 1, a binuclear center (BNC) formed by heme A3 and copper B (CU(B)). The BNC reduces molecular oxygen to 2 water molecules using 4 electrons from cytochrome c in the IMS and 4 protons from the mitochondrial matrix.</text>
</comment>
<comment type="catalytic activity">
    <reaction evidence="2">
        <text>4 Fe(II)-[cytochrome c] + O2 + 8 H(+)(in) = 4 Fe(III)-[cytochrome c] + 2 H2O + 4 H(+)(out)</text>
        <dbReference type="Rhea" id="RHEA:11436"/>
        <dbReference type="Rhea" id="RHEA-COMP:10350"/>
        <dbReference type="Rhea" id="RHEA-COMP:14399"/>
        <dbReference type="ChEBI" id="CHEBI:15377"/>
        <dbReference type="ChEBI" id="CHEBI:15378"/>
        <dbReference type="ChEBI" id="CHEBI:15379"/>
        <dbReference type="ChEBI" id="CHEBI:29033"/>
        <dbReference type="ChEBI" id="CHEBI:29034"/>
        <dbReference type="EC" id="7.1.1.9"/>
    </reaction>
    <physiologicalReaction direction="left-to-right" evidence="2">
        <dbReference type="Rhea" id="RHEA:11437"/>
    </physiologicalReaction>
</comment>
<comment type="cofactor">
    <cofactor evidence="3">
        <name>Cu cation</name>
        <dbReference type="ChEBI" id="CHEBI:23378"/>
    </cofactor>
    <text evidence="3">Binds a dinuclear copper A center per subunit.</text>
</comment>
<comment type="subunit">
    <text evidence="1 3">Component of the cytochrome c oxidase (complex IV, CIV), a multisubunit enzyme composed of 14 subunits. The complex is composed of a catalytic core of 3 subunits MT-CO1, MT-CO2 and MT-CO3, encoded in the mitochondrial DNA, and 11 supernumerary subunits COX4I, COX5A, COX5B, COX6A, COX6B, COX6C, COX7A, COX7B, COX7C, COX8 and NDUFA4, which are encoded in the nuclear genome. The complex exists as a monomer or a dimer and forms supercomplexes (SCs) in the inner mitochondrial membrane with NADH-ubiquinone oxidoreductase (complex I, CI) and ubiquinol-cytochrome c oxidoreductase (cytochrome b-c1 complex, complex III, CIII), resulting in different assemblies (supercomplex SCI(1)III(2)IV(1) and megacomplex MCI(2)III(2)IV(2)) (By similarity). Found in a complex with TMEM177, COA6, COX18, COX20, SCO1 and SCO2. Interacts with TMEM177 in a COX20-dependent manner. Interacts with COX20. Interacts with COX16 (By similarity).</text>
</comment>
<comment type="subcellular location">
    <subcellularLocation>
        <location evidence="3">Mitochondrion inner membrane</location>
        <topology evidence="3">Multi-pass membrane protein</topology>
    </subcellularLocation>
</comment>
<comment type="similarity">
    <text evidence="4">Belongs to the cytochrome c oxidase subunit 2 family.</text>
</comment>
<dbReference type="EC" id="7.1.1.9"/>
<dbReference type="EMBL" id="DQ019113">
    <property type="protein sequence ID" value="ABA28429.1"/>
    <property type="molecule type" value="Genomic_DNA"/>
</dbReference>
<dbReference type="SMR" id="Q38RX1"/>
<dbReference type="GO" id="GO:0005743">
    <property type="term" value="C:mitochondrial inner membrane"/>
    <property type="evidence" value="ECO:0007669"/>
    <property type="project" value="UniProtKB-SubCell"/>
</dbReference>
<dbReference type="GO" id="GO:0045277">
    <property type="term" value="C:respiratory chain complex IV"/>
    <property type="evidence" value="ECO:0000250"/>
    <property type="project" value="UniProtKB"/>
</dbReference>
<dbReference type="GO" id="GO:0005507">
    <property type="term" value="F:copper ion binding"/>
    <property type="evidence" value="ECO:0007669"/>
    <property type="project" value="InterPro"/>
</dbReference>
<dbReference type="GO" id="GO:0004129">
    <property type="term" value="F:cytochrome-c oxidase activity"/>
    <property type="evidence" value="ECO:0007669"/>
    <property type="project" value="UniProtKB-EC"/>
</dbReference>
<dbReference type="GO" id="GO:0042773">
    <property type="term" value="P:ATP synthesis coupled electron transport"/>
    <property type="evidence" value="ECO:0007669"/>
    <property type="project" value="TreeGrafter"/>
</dbReference>
<dbReference type="CDD" id="cd13912">
    <property type="entry name" value="CcO_II_C"/>
    <property type="match status" value="1"/>
</dbReference>
<dbReference type="FunFam" id="1.10.287.90:FF:000001">
    <property type="entry name" value="Cytochrome c oxidase subunit 2"/>
    <property type="match status" value="1"/>
</dbReference>
<dbReference type="FunFam" id="2.60.40.420:FF:000001">
    <property type="entry name" value="Cytochrome c oxidase subunit 2"/>
    <property type="match status" value="1"/>
</dbReference>
<dbReference type="Gene3D" id="1.10.287.90">
    <property type="match status" value="1"/>
</dbReference>
<dbReference type="Gene3D" id="2.60.40.420">
    <property type="entry name" value="Cupredoxins - blue copper proteins"/>
    <property type="match status" value="1"/>
</dbReference>
<dbReference type="InterPro" id="IPR045187">
    <property type="entry name" value="CcO_II"/>
</dbReference>
<dbReference type="InterPro" id="IPR002429">
    <property type="entry name" value="CcO_II-like_C"/>
</dbReference>
<dbReference type="InterPro" id="IPR034210">
    <property type="entry name" value="CcO_II_C"/>
</dbReference>
<dbReference type="InterPro" id="IPR001505">
    <property type="entry name" value="Copper_CuA"/>
</dbReference>
<dbReference type="InterPro" id="IPR008972">
    <property type="entry name" value="Cupredoxin"/>
</dbReference>
<dbReference type="InterPro" id="IPR014222">
    <property type="entry name" value="Cyt_c_oxidase_su2"/>
</dbReference>
<dbReference type="InterPro" id="IPR011759">
    <property type="entry name" value="Cyt_c_oxidase_su2_TM_dom"/>
</dbReference>
<dbReference type="InterPro" id="IPR036257">
    <property type="entry name" value="Cyt_c_oxidase_su2_TM_sf"/>
</dbReference>
<dbReference type="NCBIfam" id="TIGR02866">
    <property type="entry name" value="CoxB"/>
    <property type="match status" value="1"/>
</dbReference>
<dbReference type="PANTHER" id="PTHR22888:SF9">
    <property type="entry name" value="CYTOCHROME C OXIDASE SUBUNIT 2"/>
    <property type="match status" value="1"/>
</dbReference>
<dbReference type="PANTHER" id="PTHR22888">
    <property type="entry name" value="CYTOCHROME C OXIDASE, SUBUNIT II"/>
    <property type="match status" value="1"/>
</dbReference>
<dbReference type="Pfam" id="PF00116">
    <property type="entry name" value="COX2"/>
    <property type="match status" value="1"/>
</dbReference>
<dbReference type="Pfam" id="PF02790">
    <property type="entry name" value="COX2_TM"/>
    <property type="match status" value="1"/>
</dbReference>
<dbReference type="PRINTS" id="PR01166">
    <property type="entry name" value="CYCOXIDASEII"/>
</dbReference>
<dbReference type="SUPFAM" id="SSF49503">
    <property type="entry name" value="Cupredoxins"/>
    <property type="match status" value="1"/>
</dbReference>
<dbReference type="SUPFAM" id="SSF81464">
    <property type="entry name" value="Cytochrome c oxidase subunit II-like, transmembrane region"/>
    <property type="match status" value="1"/>
</dbReference>
<dbReference type="PROSITE" id="PS00078">
    <property type="entry name" value="COX2"/>
    <property type="match status" value="1"/>
</dbReference>
<dbReference type="PROSITE" id="PS50857">
    <property type="entry name" value="COX2_CUA"/>
    <property type="match status" value="1"/>
</dbReference>
<dbReference type="PROSITE" id="PS50999">
    <property type="entry name" value="COX2_TM"/>
    <property type="match status" value="1"/>
</dbReference>
<name>COX2_PRAJA</name>
<proteinExistence type="inferred from homology"/>
<organism>
    <name type="scientific">Praomys jacksoni</name>
    <name type="common">African forest rat</name>
    <name type="synonym">Jackson's soft-furred mouse</name>
    <dbReference type="NCBI Taxonomy" id="209866"/>
    <lineage>
        <taxon>Eukaryota</taxon>
        <taxon>Metazoa</taxon>
        <taxon>Chordata</taxon>
        <taxon>Craniata</taxon>
        <taxon>Vertebrata</taxon>
        <taxon>Euteleostomi</taxon>
        <taxon>Mammalia</taxon>
        <taxon>Eutheria</taxon>
        <taxon>Euarchontoglires</taxon>
        <taxon>Glires</taxon>
        <taxon>Rodentia</taxon>
        <taxon>Myomorpha</taxon>
        <taxon>Muroidea</taxon>
        <taxon>Muridae</taxon>
        <taxon>Murinae</taxon>
        <taxon>Praomys</taxon>
    </lineage>
</organism>
<accession>Q38RX1</accession>